<name>PG195_MONPV</name>
<keyword id="KW-1185">Reference proteome</keyword>
<evidence type="ECO:0000305" key="1"/>
<organismHost>
    <name type="scientific">Cynomys gunnisoni</name>
    <name type="common">Gunnison's prairie dog</name>
    <name type="synonym">Spermophilus gunnisoni</name>
    <dbReference type="NCBI Taxonomy" id="45479"/>
</organismHost>
<organismHost>
    <name type="scientific">Cynomys leucurus</name>
    <name type="common">White-tailed prairie dog</name>
    <dbReference type="NCBI Taxonomy" id="99825"/>
</organismHost>
<organismHost>
    <name type="scientific">Cynomys ludovicianus</name>
    <name type="common">Black-tailed prairie dog</name>
    <dbReference type="NCBI Taxonomy" id="45480"/>
</organismHost>
<organismHost>
    <name type="scientific">Cynomys mexicanus</name>
    <name type="common">Mexican prairie dog</name>
    <dbReference type="NCBI Taxonomy" id="99826"/>
</organismHost>
<organismHost>
    <name type="scientific">Cynomys parvidens</name>
    <name type="common">Utah prairie dog</name>
    <dbReference type="NCBI Taxonomy" id="99827"/>
</organismHost>
<organismHost>
    <name type="scientific">Gliridae</name>
    <name type="common">dormice</name>
    <dbReference type="NCBI Taxonomy" id="30650"/>
</organismHost>
<organismHost>
    <name type="scientific">Heliosciurus ruwenzorii</name>
    <name type="common">Ruwenzori sun squirrel</name>
    <dbReference type="NCBI Taxonomy" id="226685"/>
</organismHost>
<organismHost>
    <name type="scientific">Homo sapiens</name>
    <name type="common">Human</name>
    <dbReference type="NCBI Taxonomy" id="9606"/>
</organismHost>
<organismHost>
    <name type="scientific">Mus musculus</name>
    <name type="common">Mouse</name>
    <dbReference type="NCBI Taxonomy" id="10090"/>
</organismHost>
<protein>
    <recommendedName>
        <fullName>Protein OPG195</fullName>
    </recommendedName>
</protein>
<comment type="induction">
    <text>Expressed in the intermediate phase of the viral replicative cycle.</text>
</comment>
<comment type="similarity">
    <text evidence="1">Belongs to the orthopoxvirus OPG195 protein family.</text>
</comment>
<proteinExistence type="evidence at transcript level"/>
<organism>
    <name type="scientific">Monkeypox virus</name>
    <dbReference type="NCBI Taxonomy" id="10244"/>
    <lineage>
        <taxon>Viruses</taxon>
        <taxon>Varidnaviria</taxon>
        <taxon>Bamfordvirae</taxon>
        <taxon>Nucleocytoviricota</taxon>
        <taxon>Pokkesviricetes</taxon>
        <taxon>Chitovirales</taxon>
        <taxon>Poxviridae</taxon>
        <taxon>Chordopoxvirinae</taxon>
        <taxon>Orthopoxvirus</taxon>
    </lineage>
</organism>
<feature type="chain" id="PRO_0000457592" description="Protein OPG195">
    <location>
        <begin position="1"/>
        <end position="221"/>
    </location>
</feature>
<accession>A0A7H0DNF6</accession>
<gene>
    <name type="primary">OPG195</name>
    <name type="ORF">MPXVgp171</name>
</gene>
<sequence length="221" mass="25460">MRSLIIVLLFPSIIYSMSIRRCEKTEEETWGLKIGLCIIAKDFYPERTDCSVHRPTASGGLITEGNGFRVVIYDQCTEPHDFIITDTQQTRLGSSHTYIKFSNMNTGVPSSIPKCSRTLCISVYCDQEAGDIKFEEYTQESSDISIRVKYDSSCIDYLGINQSFMNECIRRITTWDRESCVRIDTQTINKYLKSCTNTKFDRNVYKRYILKSKALHAKTEL</sequence>
<reference key="1">
    <citation type="journal article" date="2022" name="J. Infect. Dis.">
        <title>Exportation of Monkeypox virus from the African continent.</title>
        <authorList>
            <person name="Mauldin M.R."/>
            <person name="McCollum A.M."/>
            <person name="Nakazawa Y.J."/>
            <person name="Mandra A."/>
            <person name="Whitehouse E.R."/>
            <person name="Davidson W."/>
            <person name="Zhao H."/>
            <person name="Gao J."/>
            <person name="Li Y."/>
            <person name="Doty J."/>
            <person name="Yinka-Ogunleye A."/>
            <person name="Akinpelu A."/>
            <person name="Aruna O."/>
            <person name="Naidoo D."/>
            <person name="Lewandowski K."/>
            <person name="Afrough B."/>
            <person name="Graham V."/>
            <person name="Aarons E."/>
            <person name="Hewson R."/>
            <person name="Vipond R."/>
            <person name="Dunning J."/>
            <person name="Chand M."/>
            <person name="Brown C."/>
            <person name="Cohen-Gihon I."/>
            <person name="Erez N."/>
            <person name="Shifman O."/>
            <person name="Israeli O."/>
            <person name="Sharon M."/>
            <person name="Schwartz E."/>
            <person name="Beth-Din A."/>
            <person name="Zvi A."/>
            <person name="Mak T.M."/>
            <person name="Ng Y.K."/>
            <person name="Cui L."/>
            <person name="Lin R.T.P."/>
            <person name="Olson V.A."/>
            <person name="Brooks T."/>
            <person name="Paran N."/>
            <person name="Ihekweazu C."/>
            <person name="Reynolds M.G."/>
        </authorList>
    </citation>
    <scope>NUCLEOTIDE SEQUENCE [LARGE SCALE GENOMIC DNA]</scope>
    <source>
        <strain>MPXV-M5312_HM12_Rivers</strain>
    </source>
</reference>
<dbReference type="EMBL" id="MT903340">
    <property type="protein sequence ID" value="QNP13039.1"/>
    <property type="molecule type" value="Genomic_DNA"/>
</dbReference>
<dbReference type="RefSeq" id="YP_010377166.1">
    <property type="nucleotide sequence ID" value="NC_063383.1"/>
</dbReference>
<dbReference type="SMR" id="A0A7H0DNF6"/>
<dbReference type="GeneID" id="72551580"/>
<dbReference type="Proteomes" id="UP000516359">
    <property type="component" value="Genome"/>
</dbReference>
<dbReference type="Gene3D" id="2.60.240.30">
    <property type="match status" value="1"/>
</dbReference>
<dbReference type="InterPro" id="IPR016399">
    <property type="entry name" value="Apoptosis_reg_M-T4"/>
</dbReference>
<dbReference type="InterPro" id="IPR038687">
    <property type="entry name" value="M-T4_sf"/>
</dbReference>
<dbReference type="InterPro" id="IPR007579">
    <property type="entry name" value="Poxvirus_T4p_C"/>
</dbReference>
<dbReference type="InterPro" id="IPR007580">
    <property type="entry name" value="Poxvirus_T4p_N"/>
</dbReference>
<dbReference type="Pfam" id="PF04490">
    <property type="entry name" value="Pox_T4_C"/>
    <property type="match status" value="1"/>
</dbReference>
<dbReference type="Pfam" id="PF04491">
    <property type="entry name" value="Pox_T4_N"/>
    <property type="match status" value="1"/>
</dbReference>
<dbReference type="PIRSF" id="PIRSF003796">
    <property type="entry name" value="Apoptosisregulator_M-T4"/>
    <property type="match status" value="1"/>
</dbReference>